<gene>
    <name evidence="1" type="primary">ade1</name>
    <name type="ordered locus">BRADO2460</name>
</gene>
<keyword id="KW-0378">Hydrolase</keyword>
<keyword id="KW-0464">Manganese</keyword>
<keyword id="KW-1185">Reference proteome</keyword>
<evidence type="ECO:0000255" key="1">
    <source>
        <dbReference type="HAMAP-Rule" id="MF_01518"/>
    </source>
</evidence>
<accession>A4YQV7</accession>
<comment type="catalytic activity">
    <reaction evidence="1">
        <text>adenine + H2O + H(+) = hypoxanthine + NH4(+)</text>
        <dbReference type="Rhea" id="RHEA:23688"/>
        <dbReference type="ChEBI" id="CHEBI:15377"/>
        <dbReference type="ChEBI" id="CHEBI:15378"/>
        <dbReference type="ChEBI" id="CHEBI:16708"/>
        <dbReference type="ChEBI" id="CHEBI:17368"/>
        <dbReference type="ChEBI" id="CHEBI:28938"/>
        <dbReference type="EC" id="3.5.4.2"/>
    </reaction>
</comment>
<comment type="cofactor">
    <cofactor evidence="1">
        <name>Mn(2+)</name>
        <dbReference type="ChEBI" id="CHEBI:29035"/>
    </cofactor>
</comment>
<comment type="similarity">
    <text evidence="1">Belongs to the metallo-dependent hydrolases superfamily. Adenine deaminase family.</text>
</comment>
<protein>
    <recommendedName>
        <fullName evidence="1">Adenine deaminase 1</fullName>
        <shortName evidence="1">Adenase 1</shortName>
        <shortName evidence="1">Adenine aminase 1</shortName>
        <ecNumber evidence="1">3.5.4.2</ecNumber>
    </recommendedName>
</protein>
<proteinExistence type="inferred from homology"/>
<organism>
    <name type="scientific">Bradyrhizobium sp. (strain ORS 278)</name>
    <dbReference type="NCBI Taxonomy" id="114615"/>
    <lineage>
        <taxon>Bacteria</taxon>
        <taxon>Pseudomonadati</taxon>
        <taxon>Pseudomonadota</taxon>
        <taxon>Alphaproteobacteria</taxon>
        <taxon>Hyphomicrobiales</taxon>
        <taxon>Nitrobacteraceae</taxon>
        <taxon>Bradyrhizobium</taxon>
    </lineage>
</organism>
<reference key="1">
    <citation type="journal article" date="2007" name="Science">
        <title>Legumes symbioses: absence of nod genes in photosynthetic bradyrhizobia.</title>
        <authorList>
            <person name="Giraud E."/>
            <person name="Moulin L."/>
            <person name="Vallenet D."/>
            <person name="Barbe V."/>
            <person name="Cytryn E."/>
            <person name="Avarre J.-C."/>
            <person name="Jaubert M."/>
            <person name="Simon D."/>
            <person name="Cartieaux F."/>
            <person name="Prin Y."/>
            <person name="Bena G."/>
            <person name="Hannibal L."/>
            <person name="Fardoux J."/>
            <person name="Kojadinovic M."/>
            <person name="Vuillet L."/>
            <person name="Lajus A."/>
            <person name="Cruveiller S."/>
            <person name="Rouy Z."/>
            <person name="Mangenot S."/>
            <person name="Segurens B."/>
            <person name="Dossat C."/>
            <person name="Franck W.L."/>
            <person name="Chang W.-S."/>
            <person name="Saunders E."/>
            <person name="Bruce D."/>
            <person name="Richardson P."/>
            <person name="Normand P."/>
            <person name="Dreyfus B."/>
            <person name="Pignol D."/>
            <person name="Stacey G."/>
            <person name="Emerich D."/>
            <person name="Vermeglio A."/>
            <person name="Medigue C."/>
            <person name="Sadowsky M."/>
        </authorList>
    </citation>
    <scope>NUCLEOTIDE SEQUENCE [LARGE SCALE GENOMIC DNA]</scope>
    <source>
        <strain>ORS 278</strain>
    </source>
</reference>
<feature type="chain" id="PRO_0000296717" description="Adenine deaminase 1">
    <location>
        <begin position="1"/>
        <end position="624"/>
    </location>
</feature>
<dbReference type="EC" id="3.5.4.2" evidence="1"/>
<dbReference type="EMBL" id="CU234118">
    <property type="protein sequence ID" value="CAL76283.1"/>
    <property type="molecule type" value="Genomic_DNA"/>
</dbReference>
<dbReference type="RefSeq" id="WP_011925495.1">
    <property type="nucleotide sequence ID" value="NC_009445.1"/>
</dbReference>
<dbReference type="SMR" id="A4YQV7"/>
<dbReference type="STRING" id="114615.BRADO2460"/>
<dbReference type="KEGG" id="bra:BRADO2460"/>
<dbReference type="eggNOG" id="COG1001">
    <property type="taxonomic scope" value="Bacteria"/>
</dbReference>
<dbReference type="HOGENOM" id="CLU_027935_0_0_5"/>
<dbReference type="OrthoDB" id="9775607at2"/>
<dbReference type="Proteomes" id="UP000001994">
    <property type="component" value="Chromosome"/>
</dbReference>
<dbReference type="GO" id="GO:0000034">
    <property type="term" value="F:adenine deaminase activity"/>
    <property type="evidence" value="ECO:0007669"/>
    <property type="project" value="UniProtKB-UniRule"/>
</dbReference>
<dbReference type="GO" id="GO:0006146">
    <property type="term" value="P:adenine catabolic process"/>
    <property type="evidence" value="ECO:0007669"/>
    <property type="project" value="InterPro"/>
</dbReference>
<dbReference type="Gene3D" id="3.20.20.140">
    <property type="entry name" value="Metal-dependent hydrolases"/>
    <property type="match status" value="1"/>
</dbReference>
<dbReference type="Gene3D" id="2.30.40.10">
    <property type="entry name" value="Urease, subunit C, domain 1"/>
    <property type="match status" value="1"/>
</dbReference>
<dbReference type="HAMAP" id="MF_01518">
    <property type="entry name" value="Adenine_deamin"/>
    <property type="match status" value="1"/>
</dbReference>
<dbReference type="InterPro" id="IPR006679">
    <property type="entry name" value="Adenine_deam"/>
</dbReference>
<dbReference type="InterPro" id="IPR026912">
    <property type="entry name" value="Adenine_deam_C"/>
</dbReference>
<dbReference type="InterPro" id="IPR006680">
    <property type="entry name" value="Amidohydro-rel"/>
</dbReference>
<dbReference type="InterPro" id="IPR011059">
    <property type="entry name" value="Metal-dep_hydrolase_composite"/>
</dbReference>
<dbReference type="InterPro" id="IPR032466">
    <property type="entry name" value="Metal_Hydrolase"/>
</dbReference>
<dbReference type="PANTHER" id="PTHR11113:SF2">
    <property type="entry name" value="ADENINE DEAMINASE"/>
    <property type="match status" value="1"/>
</dbReference>
<dbReference type="PANTHER" id="PTHR11113">
    <property type="entry name" value="N-ACETYLGLUCOSAMINE-6-PHOSPHATE DEACETYLASE"/>
    <property type="match status" value="1"/>
</dbReference>
<dbReference type="Pfam" id="PF13382">
    <property type="entry name" value="Adenine_deam_C"/>
    <property type="match status" value="1"/>
</dbReference>
<dbReference type="Pfam" id="PF01979">
    <property type="entry name" value="Amidohydro_1"/>
    <property type="match status" value="1"/>
</dbReference>
<dbReference type="SUPFAM" id="SSF51338">
    <property type="entry name" value="Composite domain of metallo-dependent hydrolases"/>
    <property type="match status" value="1"/>
</dbReference>
<dbReference type="SUPFAM" id="SSF51556">
    <property type="entry name" value="Metallo-dependent hydrolases"/>
    <property type="match status" value="1"/>
</dbReference>
<sequence>MDLAQDIADDLMIDAAQEVRIRQDLVLTALGHRPADRALRVGRLLDVHSRTWSEDQEIVFKGRRIAWVGPAGSYRGEVRERVQRPDLAAVPGFGEVHKHIESSHLTPEWEAALVLPRGNTWTCEASHEFSNVNGARNLEFWFEARRRGSPLKIFPQPGSAVPPTAYEWGGGWYGGAEQASFMRESLMVTGLDEVMDWPAVWNPDNPSYERLWGMIGATFAARGVVEGHASGLRELPEINAFAAAGLASDHEVQTPEETWDKLTRGLFIELRIYAMPEIIGWLLKKGLQDWSQIAFTTDDRSASHTLALGASDHNARVAIEAGLAPEIAIQCLTINPARHMRLTPFVGSLAPGRFGDVVLLSDVGKLEIAEVWADGAQVSEGTRYLGDVPRIAWPDWATQTINIKREIKAEDFALPAAPGRTTMQAAVIRPFHWHPEFYTFELAVRDGAVQRDESQAITKFAIVDRFSGDGLVSKMFWKGCGPRTPETALACSVAHDKHNIWAVGSSDAAMAKAVNALVAQQGGWALVREGELAATVRFEVGGLMSCRRAEALDAEMQALYAEGRKVDWMYEPTFRPRWYPGFPERLMFATLTCAPWSWVLVAPCEQAPQGFINVQTGKTHPVVW</sequence>
<name>ADEC1_BRASO</name>